<reference key="1">
    <citation type="journal article" date="2014" name="Stand. Genomic Sci.">
        <title>Complete genome sequence of Burkholderia phymatum STM815(T), a broad host range and efficient nitrogen-fixing symbiont of Mimosa species.</title>
        <authorList>
            <person name="Moulin L."/>
            <person name="Klonowska A."/>
            <person name="Caroline B."/>
            <person name="Booth K."/>
            <person name="Vriezen J.A."/>
            <person name="Melkonian R."/>
            <person name="James E.K."/>
            <person name="Young J.P."/>
            <person name="Bena G."/>
            <person name="Hauser L."/>
            <person name="Land M."/>
            <person name="Kyrpides N."/>
            <person name="Bruce D."/>
            <person name="Chain P."/>
            <person name="Copeland A."/>
            <person name="Pitluck S."/>
            <person name="Woyke T."/>
            <person name="Lizotte-Waniewski M."/>
            <person name="Bristow J."/>
            <person name="Riley M."/>
        </authorList>
    </citation>
    <scope>NUCLEOTIDE SEQUENCE [LARGE SCALE GENOMIC DNA]</scope>
    <source>
        <strain>DSM 17167 / CIP 108236 / LMG 21445 / STM815</strain>
    </source>
</reference>
<keyword id="KW-0028">Amino-acid biosynthesis</keyword>
<keyword id="KW-0067">ATP-binding</keyword>
<keyword id="KW-0963">Cytoplasm</keyword>
<keyword id="KW-0418">Kinase</keyword>
<keyword id="KW-0547">Nucleotide-binding</keyword>
<keyword id="KW-0641">Proline biosynthesis</keyword>
<keyword id="KW-1185">Reference proteome</keyword>
<keyword id="KW-0808">Transferase</keyword>
<comment type="function">
    <text evidence="1">Catalyzes the transfer of a phosphate group to glutamate to form L-glutamate 5-phosphate.</text>
</comment>
<comment type="catalytic activity">
    <reaction evidence="1">
        <text>L-glutamate + ATP = L-glutamyl 5-phosphate + ADP</text>
        <dbReference type="Rhea" id="RHEA:14877"/>
        <dbReference type="ChEBI" id="CHEBI:29985"/>
        <dbReference type="ChEBI" id="CHEBI:30616"/>
        <dbReference type="ChEBI" id="CHEBI:58274"/>
        <dbReference type="ChEBI" id="CHEBI:456216"/>
        <dbReference type="EC" id="2.7.2.11"/>
    </reaction>
</comment>
<comment type="pathway">
    <text evidence="1">Amino-acid biosynthesis; L-proline biosynthesis; L-glutamate 5-semialdehyde from L-glutamate: step 1/2.</text>
</comment>
<comment type="subcellular location">
    <subcellularLocation>
        <location evidence="1">Cytoplasm</location>
    </subcellularLocation>
</comment>
<comment type="similarity">
    <text evidence="1">Belongs to the glutamate 5-kinase family.</text>
</comment>
<feature type="chain" id="PRO_1000125220" description="Glutamate 5-kinase">
    <location>
        <begin position="1"/>
        <end position="372"/>
    </location>
</feature>
<feature type="domain" description="PUA" evidence="1">
    <location>
        <begin position="280"/>
        <end position="358"/>
    </location>
</feature>
<feature type="binding site" evidence="1">
    <location>
        <position position="14"/>
    </location>
    <ligand>
        <name>ATP</name>
        <dbReference type="ChEBI" id="CHEBI:30616"/>
    </ligand>
</feature>
<feature type="binding site" evidence="1">
    <location>
        <position position="54"/>
    </location>
    <ligand>
        <name>substrate</name>
    </ligand>
</feature>
<feature type="binding site" evidence="1">
    <location>
        <position position="141"/>
    </location>
    <ligand>
        <name>substrate</name>
    </ligand>
</feature>
<feature type="binding site" evidence="1">
    <location>
        <position position="153"/>
    </location>
    <ligand>
        <name>substrate</name>
    </ligand>
</feature>
<feature type="binding site" evidence="1">
    <location>
        <begin position="173"/>
        <end position="174"/>
    </location>
    <ligand>
        <name>ATP</name>
        <dbReference type="ChEBI" id="CHEBI:30616"/>
    </ligand>
</feature>
<dbReference type="EC" id="2.7.2.11" evidence="1"/>
<dbReference type="EMBL" id="CP001043">
    <property type="protein sequence ID" value="ACC71821.1"/>
    <property type="molecule type" value="Genomic_DNA"/>
</dbReference>
<dbReference type="RefSeq" id="WP_012402023.1">
    <property type="nucleotide sequence ID" value="NC_010622.1"/>
</dbReference>
<dbReference type="SMR" id="B2JHD6"/>
<dbReference type="STRING" id="391038.Bphy_2649"/>
<dbReference type="KEGG" id="bph:Bphy_2649"/>
<dbReference type="eggNOG" id="COG0263">
    <property type="taxonomic scope" value="Bacteria"/>
</dbReference>
<dbReference type="HOGENOM" id="CLU_025400_2_0_4"/>
<dbReference type="OrthoDB" id="9804434at2"/>
<dbReference type="UniPathway" id="UPA00098">
    <property type="reaction ID" value="UER00359"/>
</dbReference>
<dbReference type="Proteomes" id="UP000001192">
    <property type="component" value="Chromosome 1"/>
</dbReference>
<dbReference type="GO" id="GO:0005829">
    <property type="term" value="C:cytosol"/>
    <property type="evidence" value="ECO:0007669"/>
    <property type="project" value="TreeGrafter"/>
</dbReference>
<dbReference type="GO" id="GO:0005524">
    <property type="term" value="F:ATP binding"/>
    <property type="evidence" value="ECO:0007669"/>
    <property type="project" value="UniProtKB-KW"/>
</dbReference>
<dbReference type="GO" id="GO:0004349">
    <property type="term" value="F:glutamate 5-kinase activity"/>
    <property type="evidence" value="ECO:0007669"/>
    <property type="project" value="UniProtKB-UniRule"/>
</dbReference>
<dbReference type="GO" id="GO:0003723">
    <property type="term" value="F:RNA binding"/>
    <property type="evidence" value="ECO:0007669"/>
    <property type="project" value="InterPro"/>
</dbReference>
<dbReference type="GO" id="GO:0055129">
    <property type="term" value="P:L-proline biosynthetic process"/>
    <property type="evidence" value="ECO:0007669"/>
    <property type="project" value="UniProtKB-UniRule"/>
</dbReference>
<dbReference type="CDD" id="cd04242">
    <property type="entry name" value="AAK_G5K_ProB"/>
    <property type="match status" value="1"/>
</dbReference>
<dbReference type="CDD" id="cd21157">
    <property type="entry name" value="PUA_G5K"/>
    <property type="match status" value="1"/>
</dbReference>
<dbReference type="FunFam" id="2.30.130.10:FF:000007">
    <property type="entry name" value="Glutamate 5-kinase"/>
    <property type="match status" value="1"/>
</dbReference>
<dbReference type="FunFam" id="3.40.1160.10:FF:000018">
    <property type="entry name" value="Glutamate 5-kinase"/>
    <property type="match status" value="1"/>
</dbReference>
<dbReference type="Gene3D" id="3.40.1160.10">
    <property type="entry name" value="Acetylglutamate kinase-like"/>
    <property type="match status" value="1"/>
</dbReference>
<dbReference type="Gene3D" id="2.30.130.10">
    <property type="entry name" value="PUA domain"/>
    <property type="match status" value="1"/>
</dbReference>
<dbReference type="HAMAP" id="MF_00456">
    <property type="entry name" value="ProB"/>
    <property type="match status" value="1"/>
</dbReference>
<dbReference type="InterPro" id="IPR036393">
    <property type="entry name" value="AceGlu_kinase-like_sf"/>
</dbReference>
<dbReference type="InterPro" id="IPR001048">
    <property type="entry name" value="Asp/Glu/Uridylate_kinase"/>
</dbReference>
<dbReference type="InterPro" id="IPR041739">
    <property type="entry name" value="G5K_ProB"/>
</dbReference>
<dbReference type="InterPro" id="IPR001057">
    <property type="entry name" value="Glu/AcGlu_kinase"/>
</dbReference>
<dbReference type="InterPro" id="IPR011529">
    <property type="entry name" value="Glu_5kinase"/>
</dbReference>
<dbReference type="InterPro" id="IPR005715">
    <property type="entry name" value="Glu_5kinase/COase_Synthase"/>
</dbReference>
<dbReference type="InterPro" id="IPR019797">
    <property type="entry name" value="Glutamate_5-kinase_CS"/>
</dbReference>
<dbReference type="InterPro" id="IPR002478">
    <property type="entry name" value="PUA"/>
</dbReference>
<dbReference type="InterPro" id="IPR015947">
    <property type="entry name" value="PUA-like_sf"/>
</dbReference>
<dbReference type="InterPro" id="IPR036974">
    <property type="entry name" value="PUA_sf"/>
</dbReference>
<dbReference type="NCBIfam" id="TIGR01027">
    <property type="entry name" value="proB"/>
    <property type="match status" value="1"/>
</dbReference>
<dbReference type="PANTHER" id="PTHR43654">
    <property type="entry name" value="GLUTAMATE 5-KINASE"/>
    <property type="match status" value="1"/>
</dbReference>
<dbReference type="PANTHER" id="PTHR43654:SF1">
    <property type="entry name" value="ISOPENTENYL PHOSPHATE KINASE"/>
    <property type="match status" value="1"/>
</dbReference>
<dbReference type="Pfam" id="PF00696">
    <property type="entry name" value="AA_kinase"/>
    <property type="match status" value="1"/>
</dbReference>
<dbReference type="Pfam" id="PF01472">
    <property type="entry name" value="PUA"/>
    <property type="match status" value="1"/>
</dbReference>
<dbReference type="PIRSF" id="PIRSF000729">
    <property type="entry name" value="GK"/>
    <property type="match status" value="1"/>
</dbReference>
<dbReference type="PRINTS" id="PR00474">
    <property type="entry name" value="GLU5KINASE"/>
</dbReference>
<dbReference type="SMART" id="SM00359">
    <property type="entry name" value="PUA"/>
    <property type="match status" value="1"/>
</dbReference>
<dbReference type="SUPFAM" id="SSF53633">
    <property type="entry name" value="Carbamate kinase-like"/>
    <property type="match status" value="1"/>
</dbReference>
<dbReference type="SUPFAM" id="SSF88697">
    <property type="entry name" value="PUA domain-like"/>
    <property type="match status" value="1"/>
</dbReference>
<dbReference type="PROSITE" id="PS00902">
    <property type="entry name" value="GLUTAMATE_5_KINASE"/>
    <property type="match status" value="1"/>
</dbReference>
<dbReference type="PROSITE" id="PS50890">
    <property type="entry name" value="PUA"/>
    <property type="match status" value="1"/>
</dbReference>
<evidence type="ECO:0000255" key="1">
    <source>
        <dbReference type="HAMAP-Rule" id="MF_00456"/>
    </source>
</evidence>
<protein>
    <recommendedName>
        <fullName evidence="1">Glutamate 5-kinase</fullName>
        <ecNumber evidence="1">2.7.2.11</ecNumber>
    </recommendedName>
    <alternativeName>
        <fullName evidence="1">Gamma-glutamyl kinase</fullName>
        <shortName evidence="1">GK</shortName>
    </alternativeName>
</protein>
<name>PROB_PARP8</name>
<sequence length="372" mass="39537">MRSVIADSRRLVVKVGSSLVTNDGRGLDHTAIGRWAAQIAALREQGKEVVLVSSGAIAEGMQRLGWTRRPREIDELQAAAAVGQMGLAQVYESRFSEHSIRTAQILLTHADLADRERYLNARSTLLTLLRLGVVPIINENDTVVTDEIKFGDNDTLGALVANLIEGDALIILTDQQGLFTADPRKDPAATLVQQADAGTPELEAMAGGAGSSIGRGGMLTKILAAKRAAHSGANTVIASGREADILARLASGEAIGTQLIARTARMAARKQWMADHLQVRGHVVIDDGAVEKLTEGGKSLLPIGVVGVQGAFARGEVIACLNAAGREVARGLTNYSSAETKLIQRRPSGEIESVLGYMLEPELIHRDNLVLV</sequence>
<organism>
    <name type="scientific">Paraburkholderia phymatum (strain DSM 17167 / CIP 108236 / LMG 21445 / STM815)</name>
    <name type="common">Burkholderia phymatum</name>
    <dbReference type="NCBI Taxonomy" id="391038"/>
    <lineage>
        <taxon>Bacteria</taxon>
        <taxon>Pseudomonadati</taxon>
        <taxon>Pseudomonadota</taxon>
        <taxon>Betaproteobacteria</taxon>
        <taxon>Burkholderiales</taxon>
        <taxon>Burkholderiaceae</taxon>
        <taxon>Paraburkholderia</taxon>
    </lineage>
</organism>
<gene>
    <name evidence="1" type="primary">proB</name>
    <name type="ordered locus">Bphy_2649</name>
</gene>
<proteinExistence type="inferred from homology"/>
<accession>B2JHD6</accession>